<evidence type="ECO:0000255" key="1">
    <source>
        <dbReference type="HAMAP-Rule" id="MF_00255"/>
    </source>
</evidence>
<accession>Q5XAJ6</accession>
<name>SYGB_STRP6</name>
<reference key="1">
    <citation type="journal article" date="2004" name="J. Infect. Dis.">
        <title>Progress toward characterization of the group A Streptococcus metagenome: complete genome sequence of a macrolide-resistant serotype M6 strain.</title>
        <authorList>
            <person name="Banks D.J."/>
            <person name="Porcella S.F."/>
            <person name="Barbian K.D."/>
            <person name="Beres S.B."/>
            <person name="Philips L.E."/>
            <person name="Voyich J.M."/>
            <person name="DeLeo F.R."/>
            <person name="Martin J.M."/>
            <person name="Somerville G.A."/>
            <person name="Musser J.M."/>
        </authorList>
    </citation>
    <scope>NUCLEOTIDE SEQUENCE [LARGE SCALE GENOMIC DNA]</scope>
    <source>
        <strain>ATCC BAA-946 / MGAS10394</strain>
    </source>
</reference>
<sequence>MSKNLLIELGLEELPAYVVTPSEKQLGERLATFLTENRLSFEDIQTFSTPRRLAVRVSGLAAQQTDLTEDFKGPAKKIALDADGNFSKAAQGFVRGKGLTTDAIEFREVKGEEYVYVTKHEAGKPAKEVLLGVTEVLSAMTFPVSMHWANNSFEYIRPVHTLTVLLDDEALDLDFLDIHSGRVSRGHRFLGKETTITSADSYEDDLRSQFVIADAKERQEMIVEQIKTLEVEQGVQVDIDEDLLNEVLNLVEFPTAFMGSFEAKYLDVPEEVLVTSMKNHQRYFVVRDQEGRLMPNFVSVRNGNDQAIENVIKGNEKVLVARLEDGEFFWREDQKLQIADLVAKLTNVTFHEKIGSLAEHMDRTRVIAASLAKEANLSAEEEAAVDRAAQIYKFDLLTGMVGEFDELQGIMGEKYALLSGEDAAVATAIREHYLPDAAGGALPETKVGAVLALADKLDTLLSFFSVGLIPSGSNDPYALRRATQGIVRILDHFGWRIPMDKLVDSLYDLSFDSLAYTNKADVMNFIRARVDKMMGKAAPKDIREAILASSTFVVPEMLAVAEALVKASHTENYKPAVESLSRAFNLAEKADASVHVDPSLFENEQENTLFAAIQGLTLAGSAAQQLEQVFVLSPVINDFFDNTMVMAEDQALKNNRLAILSDLVSKAKTIAAFNQLNTK</sequence>
<feature type="chain" id="PRO_0000072931" description="Glycine--tRNA ligase beta subunit">
    <location>
        <begin position="1"/>
        <end position="679"/>
    </location>
</feature>
<gene>
    <name evidence="1" type="primary">glyS</name>
    <name type="ordered locus">M6_Spy1432</name>
</gene>
<proteinExistence type="inferred from homology"/>
<keyword id="KW-0030">Aminoacyl-tRNA synthetase</keyword>
<keyword id="KW-0067">ATP-binding</keyword>
<keyword id="KW-0963">Cytoplasm</keyword>
<keyword id="KW-0436">Ligase</keyword>
<keyword id="KW-0547">Nucleotide-binding</keyword>
<keyword id="KW-0648">Protein biosynthesis</keyword>
<protein>
    <recommendedName>
        <fullName evidence="1">Glycine--tRNA ligase beta subunit</fullName>
        <ecNumber evidence="1">6.1.1.14</ecNumber>
    </recommendedName>
    <alternativeName>
        <fullName evidence="1">Glycyl-tRNA synthetase beta subunit</fullName>
        <shortName evidence="1">GlyRS</shortName>
    </alternativeName>
</protein>
<dbReference type="EC" id="6.1.1.14" evidence="1"/>
<dbReference type="EMBL" id="CP000003">
    <property type="protein sequence ID" value="AAT87567.1"/>
    <property type="molecule type" value="Genomic_DNA"/>
</dbReference>
<dbReference type="RefSeq" id="WP_011184848.1">
    <property type="nucleotide sequence ID" value="NC_006086.1"/>
</dbReference>
<dbReference type="SMR" id="Q5XAJ6"/>
<dbReference type="KEGG" id="spa:M6_Spy1432"/>
<dbReference type="HOGENOM" id="CLU_007220_2_2_9"/>
<dbReference type="Proteomes" id="UP000001167">
    <property type="component" value="Chromosome"/>
</dbReference>
<dbReference type="GO" id="GO:0005829">
    <property type="term" value="C:cytosol"/>
    <property type="evidence" value="ECO:0007669"/>
    <property type="project" value="TreeGrafter"/>
</dbReference>
<dbReference type="GO" id="GO:0005524">
    <property type="term" value="F:ATP binding"/>
    <property type="evidence" value="ECO:0007669"/>
    <property type="project" value="UniProtKB-UniRule"/>
</dbReference>
<dbReference type="GO" id="GO:0004820">
    <property type="term" value="F:glycine-tRNA ligase activity"/>
    <property type="evidence" value="ECO:0007669"/>
    <property type="project" value="UniProtKB-UniRule"/>
</dbReference>
<dbReference type="GO" id="GO:0006426">
    <property type="term" value="P:glycyl-tRNA aminoacylation"/>
    <property type="evidence" value="ECO:0007669"/>
    <property type="project" value="UniProtKB-UniRule"/>
</dbReference>
<dbReference type="HAMAP" id="MF_00255">
    <property type="entry name" value="Gly_tRNA_synth_beta"/>
    <property type="match status" value="1"/>
</dbReference>
<dbReference type="InterPro" id="IPR015944">
    <property type="entry name" value="Gly-tRNA-synth_bsu"/>
</dbReference>
<dbReference type="InterPro" id="IPR006194">
    <property type="entry name" value="Gly-tRNA-synth_heterodimer"/>
</dbReference>
<dbReference type="NCBIfam" id="TIGR00211">
    <property type="entry name" value="glyS"/>
    <property type="match status" value="1"/>
</dbReference>
<dbReference type="PANTHER" id="PTHR30075:SF2">
    <property type="entry name" value="GLYCINE--TRNA LIGASE, CHLOROPLASTIC_MITOCHONDRIAL 2"/>
    <property type="match status" value="1"/>
</dbReference>
<dbReference type="PANTHER" id="PTHR30075">
    <property type="entry name" value="GLYCYL-TRNA SYNTHETASE"/>
    <property type="match status" value="1"/>
</dbReference>
<dbReference type="Pfam" id="PF02092">
    <property type="entry name" value="tRNA_synt_2f"/>
    <property type="match status" value="1"/>
</dbReference>
<dbReference type="PRINTS" id="PR01045">
    <property type="entry name" value="TRNASYNTHGB"/>
</dbReference>
<dbReference type="SUPFAM" id="SSF109604">
    <property type="entry name" value="HD-domain/PDEase-like"/>
    <property type="match status" value="1"/>
</dbReference>
<dbReference type="PROSITE" id="PS50861">
    <property type="entry name" value="AA_TRNA_LIGASE_II_GLYAB"/>
    <property type="match status" value="1"/>
</dbReference>
<organism>
    <name type="scientific">Streptococcus pyogenes serotype M6 (strain ATCC BAA-946 / MGAS10394)</name>
    <dbReference type="NCBI Taxonomy" id="286636"/>
    <lineage>
        <taxon>Bacteria</taxon>
        <taxon>Bacillati</taxon>
        <taxon>Bacillota</taxon>
        <taxon>Bacilli</taxon>
        <taxon>Lactobacillales</taxon>
        <taxon>Streptococcaceae</taxon>
        <taxon>Streptococcus</taxon>
    </lineage>
</organism>
<comment type="catalytic activity">
    <reaction evidence="1">
        <text>tRNA(Gly) + glycine + ATP = glycyl-tRNA(Gly) + AMP + diphosphate</text>
        <dbReference type="Rhea" id="RHEA:16013"/>
        <dbReference type="Rhea" id="RHEA-COMP:9664"/>
        <dbReference type="Rhea" id="RHEA-COMP:9683"/>
        <dbReference type="ChEBI" id="CHEBI:30616"/>
        <dbReference type="ChEBI" id="CHEBI:33019"/>
        <dbReference type="ChEBI" id="CHEBI:57305"/>
        <dbReference type="ChEBI" id="CHEBI:78442"/>
        <dbReference type="ChEBI" id="CHEBI:78522"/>
        <dbReference type="ChEBI" id="CHEBI:456215"/>
        <dbReference type="EC" id="6.1.1.14"/>
    </reaction>
</comment>
<comment type="subunit">
    <text evidence="1">Tetramer of two alpha and two beta subunits.</text>
</comment>
<comment type="subcellular location">
    <subcellularLocation>
        <location evidence="1">Cytoplasm</location>
    </subcellularLocation>
</comment>
<comment type="similarity">
    <text evidence="1">Belongs to the class-II aminoacyl-tRNA synthetase family.</text>
</comment>